<comment type="function">
    <text evidence="1">Potential calcium-dependent cell-adhesion protein. May be required for the structural integrity of the outer segment (OS) of photoreceptor cells (By similarity).</text>
</comment>
<comment type="subunit">
    <text evidence="6">Interacts with PROM1.</text>
</comment>
<comment type="subcellular location">
    <subcellularLocation>
        <location evidence="1">Cell membrane</location>
        <topology evidence="1">Single-pass membrane protein</topology>
    </subcellularLocation>
    <text evidence="1">Localized at the junction between the inner and outer segments of rod and cone photoreceptors cells. Confined to the base of the OS. Localized on the edges of nascent evaginating disks on the side of the OS opposite the connecting cilium. Expressed at postnatal day 2 at the apical tip of the rod photoreceptor cells, the site of the developing OS. Colocalized with rhodopsin between postnatal days 2 and 9 at the base of the growing OS region (By similarity).</text>
</comment>
<comment type="alternative products">
    <event type="alternative splicing"/>
    <isoform>
        <id>Q96JP9-1</id>
        <name>1</name>
        <sequence type="displayed"/>
    </isoform>
    <isoform>
        <id>Q96JP9-2</id>
        <name>2</name>
        <sequence type="described" ref="VSP_031190 VSP_031191"/>
    </isoform>
</comment>
<comment type="PTM">
    <text evidence="1">Undergoes proteolytic cleavage; produces a soluble 95 kDa N-terminal fragment and a 25 kDa cell-associated C-terminal fragment.</text>
</comment>
<comment type="disease" evidence="7 8">
    <disease id="DI-02944">
        <name>Cone-rod dystrophy 15</name>
        <acronym>CORD15</acronym>
        <description>An autosomal recessive retinal dystrophy characterized by retinal pigment deposits visible on fundus examination, predominantly in the macular region, and initial loss of cone photoreceptors followed by rod degeneration. This leads to decreased visual acuity and sensitivity in the central visual field, followed by loss of peripheral vision. Severe loss of vision occurs earlier than in retinitis pigmentosa, due to cone photoreceptors degenerating at a higher rate than rod photoreceptors.</description>
        <dbReference type="MIM" id="613660"/>
    </disease>
    <text>The disease is caused by variants affecting the gene represented in this entry.</text>
</comment>
<organism>
    <name type="scientific">Homo sapiens</name>
    <name type="common">Human</name>
    <dbReference type="NCBI Taxonomy" id="9606"/>
    <lineage>
        <taxon>Eukaryota</taxon>
        <taxon>Metazoa</taxon>
        <taxon>Chordata</taxon>
        <taxon>Craniata</taxon>
        <taxon>Vertebrata</taxon>
        <taxon>Euteleostomi</taxon>
        <taxon>Mammalia</taxon>
        <taxon>Eutheria</taxon>
        <taxon>Euarchontoglires</taxon>
        <taxon>Primates</taxon>
        <taxon>Haplorrhini</taxon>
        <taxon>Catarrhini</taxon>
        <taxon>Hominidae</taxon>
        <taxon>Homo</taxon>
    </lineage>
</organism>
<protein>
    <recommendedName>
        <fullName evidence="12">Cadherin-related family member 1</fullName>
    </recommendedName>
    <alternativeName>
        <fullName>Photoreceptor cadherin</fullName>
        <shortName>prCAD</shortName>
    </alternativeName>
    <alternativeName>
        <fullName>Protocadherin-21</fullName>
    </alternativeName>
</protein>
<dbReference type="EMBL" id="AC022389">
    <property type="status" value="NOT_ANNOTATED_CDS"/>
    <property type="molecule type" value="Genomic_DNA"/>
</dbReference>
<dbReference type="EMBL" id="BC038799">
    <property type="protein sequence ID" value="AAH38799.1"/>
    <property type="molecule type" value="mRNA"/>
</dbReference>
<dbReference type="EMBL" id="AB053448">
    <property type="protein sequence ID" value="BAB61905.1"/>
    <property type="molecule type" value="mRNA"/>
</dbReference>
<dbReference type="EMBL" id="AL080188">
    <property type="protein sequence ID" value="CAH10732.1"/>
    <property type="molecule type" value="mRNA"/>
</dbReference>
<dbReference type="CCDS" id="CCDS53548.1">
    <molecule id="Q96JP9-2"/>
</dbReference>
<dbReference type="CCDS" id="CCDS7372.1">
    <molecule id="Q96JP9-1"/>
</dbReference>
<dbReference type="RefSeq" id="NP_001165442.1">
    <molecule id="Q96JP9-2"/>
    <property type="nucleotide sequence ID" value="NM_001171971.3"/>
</dbReference>
<dbReference type="RefSeq" id="NP_149091.1">
    <molecule id="Q96JP9-1"/>
    <property type="nucleotide sequence ID" value="NM_033100.4"/>
</dbReference>
<dbReference type="SMR" id="Q96JP9"/>
<dbReference type="BioGRID" id="124919">
    <property type="interactions" value="5"/>
</dbReference>
<dbReference type="FunCoup" id="Q96JP9">
    <property type="interactions" value="75"/>
</dbReference>
<dbReference type="IntAct" id="Q96JP9">
    <property type="interactions" value="5"/>
</dbReference>
<dbReference type="STRING" id="9606.ENSP00000485478"/>
<dbReference type="GlyCosmos" id="Q96JP9">
    <property type="glycosylation" value="3 sites, No reported glycans"/>
</dbReference>
<dbReference type="GlyGen" id="Q96JP9">
    <property type="glycosylation" value="6 sites, 5 N-linked glycans (2 sites)"/>
</dbReference>
<dbReference type="iPTMnet" id="Q96JP9"/>
<dbReference type="PhosphoSitePlus" id="Q96JP9"/>
<dbReference type="BioMuta" id="CDHR1"/>
<dbReference type="DMDM" id="166980558"/>
<dbReference type="jPOST" id="Q96JP9"/>
<dbReference type="MassIVE" id="Q96JP9"/>
<dbReference type="PaxDb" id="9606-ENSP00000485478"/>
<dbReference type="PeptideAtlas" id="Q96JP9"/>
<dbReference type="ProteomicsDB" id="77001">
    <molecule id="Q96JP9-1"/>
</dbReference>
<dbReference type="ProteomicsDB" id="77002">
    <molecule id="Q96JP9-2"/>
</dbReference>
<dbReference type="Antibodypedia" id="30037">
    <property type="antibodies" value="67 antibodies from 22 providers"/>
</dbReference>
<dbReference type="DNASU" id="92211"/>
<dbReference type="Ensembl" id="ENST00000332904.7">
    <molecule id="Q96JP9-2"/>
    <property type="protein sequence ID" value="ENSP00000331063.3"/>
    <property type="gene ID" value="ENSG00000148600.15"/>
</dbReference>
<dbReference type="Ensembl" id="ENST00000623527.4">
    <molecule id="Q96JP9-1"/>
    <property type="protein sequence ID" value="ENSP00000485478.1"/>
    <property type="gene ID" value="ENSG00000148600.15"/>
</dbReference>
<dbReference type="GeneID" id="92211"/>
<dbReference type="KEGG" id="hsa:92211"/>
<dbReference type="MANE-Select" id="ENST00000623527.4">
    <property type="protein sequence ID" value="ENSP00000485478.1"/>
    <property type="RefSeq nucleotide sequence ID" value="NM_033100.4"/>
    <property type="RefSeq protein sequence ID" value="NP_149091.1"/>
</dbReference>
<dbReference type="UCSC" id="uc001kcv.4">
    <molecule id="Q96JP9-1"/>
    <property type="organism name" value="human"/>
</dbReference>
<dbReference type="AGR" id="HGNC:14550"/>
<dbReference type="CTD" id="92211"/>
<dbReference type="DisGeNET" id="92211"/>
<dbReference type="GeneCards" id="CDHR1"/>
<dbReference type="HGNC" id="HGNC:14550">
    <property type="gene designation" value="CDHR1"/>
</dbReference>
<dbReference type="HPA" id="ENSG00000148600">
    <property type="expression patterns" value="Group enriched (retina, skin)"/>
</dbReference>
<dbReference type="MalaCards" id="CDHR1"/>
<dbReference type="MIM" id="609502">
    <property type="type" value="gene"/>
</dbReference>
<dbReference type="MIM" id="613660">
    <property type="type" value="phenotype"/>
</dbReference>
<dbReference type="neXtProt" id="NX_Q96JP9"/>
<dbReference type="OpenTargets" id="ENSG00000148600"/>
<dbReference type="Orphanet" id="1872">
    <property type="disease" value="Cone rod dystrophy"/>
</dbReference>
<dbReference type="Orphanet" id="791">
    <property type="disease" value="Retinitis pigmentosa"/>
</dbReference>
<dbReference type="PharmGKB" id="PA33005"/>
<dbReference type="VEuPathDB" id="HostDB:ENSG00000148600"/>
<dbReference type="eggNOG" id="KOG3594">
    <property type="taxonomic scope" value="Eukaryota"/>
</dbReference>
<dbReference type="GeneTree" id="ENSGT00940000155509"/>
<dbReference type="HOGENOM" id="CLU_017357_0_0_1"/>
<dbReference type="InParanoid" id="Q96JP9"/>
<dbReference type="OMA" id="WRNKRSP"/>
<dbReference type="OrthoDB" id="6510378at2759"/>
<dbReference type="PAN-GO" id="Q96JP9">
    <property type="GO annotations" value="2 GO annotations based on evolutionary models"/>
</dbReference>
<dbReference type="PhylomeDB" id="Q96JP9"/>
<dbReference type="TreeFam" id="TF332908"/>
<dbReference type="PathwayCommons" id="Q96JP9"/>
<dbReference type="SignaLink" id="Q96JP9"/>
<dbReference type="BioGRID-ORCS" id="92211">
    <property type="hits" value="8 hits in 1144 CRISPR screens"/>
</dbReference>
<dbReference type="ChiTaRS" id="CDHR1">
    <property type="organism name" value="human"/>
</dbReference>
<dbReference type="GenomeRNAi" id="92211"/>
<dbReference type="Pharos" id="Q96JP9">
    <property type="development level" value="Tbio"/>
</dbReference>
<dbReference type="PRO" id="PR:Q96JP9"/>
<dbReference type="Proteomes" id="UP000005640">
    <property type="component" value="Chromosome 10"/>
</dbReference>
<dbReference type="RNAct" id="Q96JP9">
    <property type="molecule type" value="protein"/>
</dbReference>
<dbReference type="Bgee" id="ENSG00000148600">
    <property type="expression patterns" value="Expressed in upper arm skin and 116 other cell types or tissues"/>
</dbReference>
<dbReference type="ExpressionAtlas" id="Q96JP9">
    <property type="expression patterns" value="baseline and differential"/>
</dbReference>
<dbReference type="GO" id="GO:0042622">
    <property type="term" value="C:photoreceptor outer segment membrane"/>
    <property type="evidence" value="ECO:0007669"/>
    <property type="project" value="Ensembl"/>
</dbReference>
<dbReference type="GO" id="GO:0005886">
    <property type="term" value="C:plasma membrane"/>
    <property type="evidence" value="ECO:0000318"/>
    <property type="project" value="GO_Central"/>
</dbReference>
<dbReference type="GO" id="GO:0005509">
    <property type="term" value="F:calcium ion binding"/>
    <property type="evidence" value="ECO:0007669"/>
    <property type="project" value="InterPro"/>
</dbReference>
<dbReference type="GO" id="GO:0007155">
    <property type="term" value="P:cell adhesion"/>
    <property type="evidence" value="ECO:0000318"/>
    <property type="project" value="GO_Central"/>
</dbReference>
<dbReference type="GO" id="GO:0007156">
    <property type="term" value="P:homophilic cell adhesion via plasma membrane adhesion molecules"/>
    <property type="evidence" value="ECO:0007669"/>
    <property type="project" value="InterPro"/>
</dbReference>
<dbReference type="GO" id="GO:0045494">
    <property type="term" value="P:photoreceptor cell maintenance"/>
    <property type="evidence" value="ECO:0000315"/>
    <property type="project" value="UniProtKB"/>
</dbReference>
<dbReference type="GO" id="GO:0008594">
    <property type="term" value="P:photoreceptor cell morphogenesis"/>
    <property type="evidence" value="ECO:0000315"/>
    <property type="project" value="UniProtKB"/>
</dbReference>
<dbReference type="GO" id="GO:0035845">
    <property type="term" value="P:photoreceptor cell outer segment organization"/>
    <property type="evidence" value="ECO:0000315"/>
    <property type="project" value="UniProtKB"/>
</dbReference>
<dbReference type="CDD" id="cd11304">
    <property type="entry name" value="Cadherin_repeat"/>
    <property type="match status" value="6"/>
</dbReference>
<dbReference type="FunFam" id="2.60.40.60:FF:000111">
    <property type="entry name" value="Cadherin-related family member 1"/>
    <property type="match status" value="1"/>
</dbReference>
<dbReference type="FunFam" id="2.60.40.60:FF:000113">
    <property type="entry name" value="Cadherin-related family member 1"/>
    <property type="match status" value="1"/>
</dbReference>
<dbReference type="FunFam" id="2.60.40.60:FF:000122">
    <property type="entry name" value="Cadherin-related family member 1"/>
    <property type="match status" value="1"/>
</dbReference>
<dbReference type="FunFam" id="2.60.40.60:FF:000124">
    <property type="entry name" value="Cadherin-related family member 1"/>
    <property type="match status" value="1"/>
</dbReference>
<dbReference type="FunFam" id="2.60.40.60:FF:000126">
    <property type="entry name" value="Cadherin-related family member 1"/>
    <property type="match status" value="1"/>
</dbReference>
<dbReference type="FunFam" id="2.60.40.60:FF:000177">
    <property type="entry name" value="Cadherin-related family member 1"/>
    <property type="match status" value="1"/>
</dbReference>
<dbReference type="Gene3D" id="2.60.40.60">
    <property type="entry name" value="Cadherins"/>
    <property type="match status" value="6"/>
</dbReference>
<dbReference type="InterPro" id="IPR039808">
    <property type="entry name" value="Cadherin"/>
</dbReference>
<dbReference type="InterPro" id="IPR002126">
    <property type="entry name" value="Cadherin-like_dom"/>
</dbReference>
<dbReference type="InterPro" id="IPR015919">
    <property type="entry name" value="Cadherin-like_sf"/>
</dbReference>
<dbReference type="InterPro" id="IPR020894">
    <property type="entry name" value="Cadherin_CS"/>
</dbReference>
<dbReference type="PANTHER" id="PTHR24027:SF438">
    <property type="entry name" value="CADHERIN 23"/>
    <property type="match status" value="1"/>
</dbReference>
<dbReference type="PANTHER" id="PTHR24027">
    <property type="entry name" value="CADHERIN-23"/>
    <property type="match status" value="1"/>
</dbReference>
<dbReference type="Pfam" id="PF00028">
    <property type="entry name" value="Cadherin"/>
    <property type="match status" value="5"/>
</dbReference>
<dbReference type="PRINTS" id="PR00205">
    <property type="entry name" value="CADHERIN"/>
</dbReference>
<dbReference type="SMART" id="SM00112">
    <property type="entry name" value="CA"/>
    <property type="match status" value="6"/>
</dbReference>
<dbReference type="SUPFAM" id="SSF49313">
    <property type="entry name" value="Cadherin-like"/>
    <property type="match status" value="6"/>
</dbReference>
<dbReference type="PROSITE" id="PS00232">
    <property type="entry name" value="CADHERIN_1"/>
    <property type="match status" value="2"/>
</dbReference>
<dbReference type="PROSITE" id="PS50268">
    <property type="entry name" value="CADHERIN_2"/>
    <property type="match status" value="6"/>
</dbReference>
<accession>Q96JP9</accession>
<accession>Q69YZ8</accession>
<accession>Q8IXY5</accession>
<name>CDHR1_HUMAN</name>
<reference key="1">
    <citation type="journal article" date="2004" name="Nature">
        <title>The DNA sequence and comparative analysis of human chromosome 10.</title>
        <authorList>
            <person name="Deloukas P."/>
            <person name="Earthrowl M.E."/>
            <person name="Grafham D.V."/>
            <person name="Rubenfield M."/>
            <person name="French L."/>
            <person name="Steward C.A."/>
            <person name="Sims S.K."/>
            <person name="Jones M.C."/>
            <person name="Searle S."/>
            <person name="Scott C."/>
            <person name="Howe K."/>
            <person name="Hunt S.E."/>
            <person name="Andrews T.D."/>
            <person name="Gilbert J.G.R."/>
            <person name="Swarbreck D."/>
            <person name="Ashurst J.L."/>
            <person name="Taylor A."/>
            <person name="Battles J."/>
            <person name="Bird C.P."/>
            <person name="Ainscough R."/>
            <person name="Almeida J.P."/>
            <person name="Ashwell R.I.S."/>
            <person name="Ambrose K.D."/>
            <person name="Babbage A.K."/>
            <person name="Bagguley C.L."/>
            <person name="Bailey J."/>
            <person name="Banerjee R."/>
            <person name="Bates K."/>
            <person name="Beasley H."/>
            <person name="Bray-Allen S."/>
            <person name="Brown A.J."/>
            <person name="Brown J.Y."/>
            <person name="Burford D.C."/>
            <person name="Burrill W."/>
            <person name="Burton J."/>
            <person name="Cahill P."/>
            <person name="Camire D."/>
            <person name="Carter N.P."/>
            <person name="Chapman J.C."/>
            <person name="Clark S.Y."/>
            <person name="Clarke G."/>
            <person name="Clee C.M."/>
            <person name="Clegg S."/>
            <person name="Corby N."/>
            <person name="Coulson A."/>
            <person name="Dhami P."/>
            <person name="Dutta I."/>
            <person name="Dunn M."/>
            <person name="Faulkner L."/>
            <person name="Frankish A."/>
            <person name="Frankland J.A."/>
            <person name="Garner P."/>
            <person name="Garnett J."/>
            <person name="Gribble S."/>
            <person name="Griffiths C."/>
            <person name="Grocock R."/>
            <person name="Gustafson E."/>
            <person name="Hammond S."/>
            <person name="Harley J.L."/>
            <person name="Hart E."/>
            <person name="Heath P.D."/>
            <person name="Ho T.P."/>
            <person name="Hopkins B."/>
            <person name="Horne J."/>
            <person name="Howden P.J."/>
            <person name="Huckle E."/>
            <person name="Hynds C."/>
            <person name="Johnson C."/>
            <person name="Johnson D."/>
            <person name="Kana A."/>
            <person name="Kay M."/>
            <person name="Kimberley A.M."/>
            <person name="Kershaw J.K."/>
            <person name="Kokkinaki M."/>
            <person name="Laird G.K."/>
            <person name="Lawlor S."/>
            <person name="Lee H.M."/>
            <person name="Leongamornlert D.A."/>
            <person name="Laird G."/>
            <person name="Lloyd C."/>
            <person name="Lloyd D.M."/>
            <person name="Loveland J."/>
            <person name="Lovell J."/>
            <person name="McLaren S."/>
            <person name="McLay K.E."/>
            <person name="McMurray A."/>
            <person name="Mashreghi-Mohammadi M."/>
            <person name="Matthews L."/>
            <person name="Milne S."/>
            <person name="Nickerson T."/>
            <person name="Nguyen M."/>
            <person name="Overton-Larty E."/>
            <person name="Palmer S.A."/>
            <person name="Pearce A.V."/>
            <person name="Peck A.I."/>
            <person name="Pelan S."/>
            <person name="Phillimore B."/>
            <person name="Porter K."/>
            <person name="Rice C.M."/>
            <person name="Rogosin A."/>
            <person name="Ross M.T."/>
            <person name="Sarafidou T."/>
            <person name="Sehra H.K."/>
            <person name="Shownkeen R."/>
            <person name="Skuce C.D."/>
            <person name="Smith M."/>
            <person name="Standring L."/>
            <person name="Sycamore N."/>
            <person name="Tester J."/>
            <person name="Thorpe A."/>
            <person name="Torcasso W."/>
            <person name="Tracey A."/>
            <person name="Tromans A."/>
            <person name="Tsolas J."/>
            <person name="Wall M."/>
            <person name="Walsh J."/>
            <person name="Wang H."/>
            <person name="Weinstock K."/>
            <person name="West A.P."/>
            <person name="Willey D.L."/>
            <person name="Whitehead S.L."/>
            <person name="Wilming L."/>
            <person name="Wray P.W."/>
            <person name="Young L."/>
            <person name="Chen Y."/>
            <person name="Lovering R.C."/>
            <person name="Moschonas N.K."/>
            <person name="Siebert R."/>
            <person name="Fechtel K."/>
            <person name="Bentley D."/>
            <person name="Durbin R.M."/>
            <person name="Hubbard T."/>
            <person name="Doucette-Stamm L."/>
            <person name="Beck S."/>
            <person name="Smith D.R."/>
            <person name="Rogers J."/>
        </authorList>
    </citation>
    <scope>NUCLEOTIDE SEQUENCE [LARGE SCALE GENOMIC DNA]</scope>
</reference>
<reference key="2">
    <citation type="journal article" date="2004" name="Genome Res.">
        <title>The status, quality, and expansion of the NIH full-length cDNA project: the Mammalian Gene Collection (MGC).</title>
        <authorList>
            <consortium name="The MGC Project Team"/>
        </authorList>
    </citation>
    <scope>NUCLEOTIDE SEQUENCE [LARGE SCALE MRNA] (ISOFORM 2)</scope>
    <source>
        <tissue>Retinoblastoma</tissue>
    </source>
</reference>
<reference key="3">
    <citation type="journal article" date="2001" name="Brain Res. Mol. Brain Res.">
        <title>Identification of three novel non-classical cadherin genes through comprehensive analysis of large cDNAs.</title>
        <authorList>
            <person name="Nakajima D."/>
            <person name="Nakayama M."/>
            <person name="Kikuno R."/>
            <person name="Hirosawa M."/>
            <person name="Nagase T."/>
            <person name="Ohara O."/>
        </authorList>
    </citation>
    <scope>NUCLEOTIDE SEQUENCE [LARGE SCALE MRNA] OF 2-859 (ISOFORM 1)</scope>
    <source>
        <tissue>Brain</tissue>
    </source>
</reference>
<reference key="4">
    <citation type="journal article" date="2007" name="BMC Genomics">
        <title>The full-ORF clone resource of the German cDNA consortium.</title>
        <authorList>
            <person name="Bechtel S."/>
            <person name="Rosenfelder H."/>
            <person name="Duda A."/>
            <person name="Schmidt C.P."/>
            <person name="Ernst U."/>
            <person name="Wellenreuther R."/>
            <person name="Mehrle A."/>
            <person name="Schuster C."/>
            <person name="Bahr A."/>
            <person name="Bloecker H."/>
            <person name="Heubner D."/>
            <person name="Hoerlein A."/>
            <person name="Michel G."/>
            <person name="Wedler H."/>
            <person name="Koehrer K."/>
            <person name="Ottenwaelder B."/>
            <person name="Poustka A."/>
            <person name="Wiemann S."/>
            <person name="Schupp I."/>
        </authorList>
    </citation>
    <scope>NUCLEOTIDE SEQUENCE [LARGE SCALE MRNA] OF 595-859 (ISOFORM 1)</scope>
    <source>
        <tissue>Testis</tissue>
    </source>
</reference>
<reference key="5">
    <citation type="journal article" date="2008" name="J. Clin. Invest.">
        <title>Mutant prominin 1 found in patients with macular degeneration disrupts photoreceptor disk morphogenesis in mice.</title>
        <authorList>
            <person name="Yang Z."/>
            <person name="Chen Y."/>
            <person name="Lillo C."/>
            <person name="Chien J."/>
            <person name="Yu Z."/>
            <person name="Michaelides M."/>
            <person name="Klein M."/>
            <person name="Howes K.A."/>
            <person name="Li Y."/>
            <person name="Kaminoh Y."/>
            <person name="Chen H."/>
            <person name="Zhao C."/>
            <person name="Chen Y."/>
            <person name="Al-Sheikh Y.T."/>
            <person name="Karan G."/>
            <person name="Corbeil D."/>
            <person name="Escher P."/>
            <person name="Kamaya S."/>
            <person name="Li C."/>
            <person name="Johnson S."/>
            <person name="Frederick J.M."/>
            <person name="Zhao Y."/>
            <person name="Wang C."/>
            <person name="Cameron D.J."/>
            <person name="Huttner W.B."/>
            <person name="Schorderet D.F."/>
            <person name="Munier F.L."/>
            <person name="Moore A.T."/>
            <person name="Birch D.G."/>
            <person name="Baehr W."/>
            <person name="Hunt D.M."/>
            <person name="Williams D.S."/>
            <person name="Zhang K."/>
        </authorList>
    </citation>
    <scope>INTERACTION WITH PROM1</scope>
</reference>
<reference key="6">
    <citation type="journal article" date="2010" name="J. Med. Genet.">
        <title>Mutations in PCDH21 cause autosomal recessive cone-rod dystrophy.</title>
        <authorList>
            <person name="Ostergaard E."/>
            <person name="Batbayli M."/>
            <person name="Duno M."/>
            <person name="Vilhelmsen K."/>
            <person name="Rosenberg T."/>
        </authorList>
    </citation>
    <scope>INVOLVEMENT IN CORD15</scope>
</reference>
<reference key="7">
    <citation type="journal article" date="2005" name="Mol. Vis.">
        <title>Protocadherin-21 (PCDH21), a candidate gene for human retinal dystrophies.</title>
        <authorList>
            <person name="Bolz H."/>
            <person name="Ebermann I."/>
            <person name="Gal A."/>
        </authorList>
    </citation>
    <scope>VARIANTS THR-212 AND ALA-532</scope>
</reference>
<reference key="8">
    <citation type="journal article" date="2015" name="Sci. Rep.">
        <title>Identification of two novel mutations in CDHR1 in consanguineous Spanish families with autosomal recessive retinal dystrophy.</title>
        <authorList>
            <person name="Nikopoulos K."/>
            <person name="Avila-Fernandez A."/>
            <person name="Corton M."/>
            <person name="Lopez-Molina M.I."/>
            <person name="Perez-Carro R."/>
            <person name="Bontadelli L."/>
            <person name="Di Gioia S.A."/>
            <person name="Zurita O."/>
            <person name="Garcia-Sandoval B."/>
            <person name="Rivolta C."/>
            <person name="Ayuso C."/>
        </authorList>
    </citation>
    <scope>VARIANT CORD15 ALA-574</scope>
</reference>
<reference key="9">
    <citation type="journal article" date="2017" name="Am. J. Hum. Genet.">
        <title>Hypomorphic Recessive Variants in SUFU Impair the Sonic Hedgehog Pathway and Cause Joubert Syndrome with Cranio-facial and Skeletal Defects.</title>
        <authorList>
            <person name="De Mori R."/>
            <person name="Romani M."/>
            <person name="D'Arrigo S."/>
            <person name="Zaki M.S."/>
            <person name="Lorefice E."/>
            <person name="Tardivo S."/>
            <person name="Biagini T."/>
            <person name="Stanley V."/>
            <person name="Musaev D."/>
            <person name="Fluss J."/>
            <person name="Micalizzi A."/>
            <person name="Nuovo S."/>
            <person name="Illi B."/>
            <person name="Chiapparini L."/>
            <person name="Di Marcotullio L."/>
            <person name="Issa M.Y."/>
            <person name="Anello D."/>
            <person name="Casella A."/>
            <person name="Ginevrino M."/>
            <person name="Leggins A.S."/>
            <person name="Roosing S."/>
            <person name="Alfonsi R."/>
            <person name="Rosati J."/>
            <person name="Schot R."/>
            <person name="Mancini G.M.S."/>
            <person name="Bertini E."/>
            <person name="Dobyns W.B."/>
            <person name="Mazza T."/>
            <person name="Gleeson J.G."/>
            <person name="Valente E.M."/>
        </authorList>
    </citation>
    <scope>VARIANT SER-716</scope>
</reference>
<reference key="10">
    <citation type="journal article" date="2018" name="J. Med. Genet.">
        <title>Homozygous variants in KIAA1549, encoding a ciliary protein, are associated with autosomal recessive retinitis pigmentosa.</title>
        <authorList>
            <person name="de Bruijn S.E."/>
            <person name="Verbakel S.K."/>
            <person name="de Vrieze E."/>
            <person name="Kremer H."/>
            <person name="Cremers F.P.M."/>
            <person name="Hoyng C.B."/>
            <person name="van den Born L.I."/>
            <person name="Roosing S."/>
        </authorList>
    </citation>
    <scope>VARIANT SER-171</scope>
</reference>
<evidence type="ECO:0000250" key="1"/>
<evidence type="ECO:0000255" key="2"/>
<evidence type="ECO:0000255" key="3">
    <source>
        <dbReference type="PROSITE-ProRule" id="PRU00043"/>
    </source>
</evidence>
<evidence type="ECO:0000256" key="4">
    <source>
        <dbReference type="SAM" id="MobiDB-lite"/>
    </source>
</evidence>
<evidence type="ECO:0000269" key="5">
    <source>
    </source>
</evidence>
<evidence type="ECO:0000269" key="6">
    <source>
    </source>
</evidence>
<evidence type="ECO:0000269" key="7">
    <source>
    </source>
</evidence>
<evidence type="ECO:0000269" key="8">
    <source>
    </source>
</evidence>
<evidence type="ECO:0000269" key="9">
    <source>
    </source>
</evidence>
<evidence type="ECO:0000269" key="10">
    <source>
    </source>
</evidence>
<evidence type="ECO:0000303" key="11">
    <source>
    </source>
</evidence>
<evidence type="ECO:0000305" key="12"/>
<evidence type="ECO:0000312" key="13">
    <source>
        <dbReference type="HGNC" id="HGNC:14550"/>
    </source>
</evidence>
<keyword id="KW-0025">Alternative splicing</keyword>
<keyword id="KW-0106">Calcium</keyword>
<keyword id="KW-0130">Cell adhesion</keyword>
<keyword id="KW-1003">Cell membrane</keyword>
<keyword id="KW-0182">Cone-rod dystrophy</keyword>
<keyword id="KW-0325">Glycoprotein</keyword>
<keyword id="KW-0472">Membrane</keyword>
<keyword id="KW-1267">Proteomics identification</keyword>
<keyword id="KW-0675">Receptor</keyword>
<keyword id="KW-1185">Reference proteome</keyword>
<keyword id="KW-0677">Repeat</keyword>
<keyword id="KW-0732">Signal</keyword>
<keyword id="KW-0812">Transmembrane</keyword>
<keyword id="KW-1133">Transmembrane helix</keyword>
<gene>
    <name evidence="13" type="primary">CDHR1</name>
    <name type="synonym">KIAA1775</name>
    <name type="synonym">PCDH21</name>
    <name type="synonym">PRCAD</name>
</gene>
<proteinExistence type="evidence at protein level"/>
<sequence length="859" mass="93595">MRRCRWAALALGLLRLCLAQANFAPHFFDNGVGSTNGNMALFSLPEDTPVGSHVYTLNGTDPEGDPISYHISFDPSTRSVFSVDPTFGNITLVEELDREREDEIEAIISISDGLNLVAEKVVILVTDANDEAPRFIQEPYVALVPEDIPAGSIIFKVHAVDRDTGSGGSVTYFLQNLHSPFAVDRHSGVLRLQAGATLDYERSRTHYITVVAKDGGGRLHGADVVFSATTTVTVNVEDVQDMAPVFVGTPYYGYVYEDTLPGSEVLKVVAMDGDRGKPNRILYSLVNGNDGAFEINETSGAISITQSPAQLQREVYELHVQVTEMSPAGSPAAQATVPVTIRIVDLNNHPPTFYGESGPQNRFELSMNEHPPQGEILRGLKITVNDSDQGANAKFNLQLVGPRGIFRVVPQTVLNEAQVTIIVENSAAIDFEKSKVLTFKLLAVEVNTPEKFSSTADVVIQLLDTNDNVPKFDSLYYVARIPENAPGGSSVVAVTAVDPDTGPWGEVKYSTYGTGADLFLIHPSTGLIYTQPWASLDAEATARYNFYVKAEDMEGKYSVAEVFITLLDVNDHPPQFGKSVQKKTMVLGTPVKIEAIDEDAEEPNNLVDYSITHAEPANVFDINSHTGEIWLKNSIRSLDALHNITPGRDCLWSLEVQAKDRGSPSFSTTALLKIDITDAETLSRSPMAAFLIQTKDNPMKAVGVLAGTMATVVAITVLISTATFWRNKKSNKVLPMRRVLRKRPSPAPRTIRIEWLKSKSTKAATKFMLKEKPPNENCNNNSPESSLLPRAPALPPPPSVAPSTGAAQWTVPTVSGSLTPQPTQPPPKPKTMGSPVQSTLISELKQKFEKKSVHNKAYF</sequence>
<feature type="signal peptide" evidence="2">
    <location>
        <begin position="1"/>
        <end position="19"/>
    </location>
</feature>
<feature type="chain" id="PRO_0000318498" description="Cadherin-related family member 1">
    <location>
        <begin position="20"/>
        <end position="859"/>
    </location>
</feature>
<feature type="topological domain" description="Extracellular" evidence="2">
    <location>
        <begin position="20"/>
        <end position="700"/>
    </location>
</feature>
<feature type="transmembrane region" description="Helical" evidence="2">
    <location>
        <begin position="701"/>
        <end position="721"/>
    </location>
</feature>
<feature type="topological domain" description="Cytoplasmic" evidence="2">
    <location>
        <begin position="722"/>
        <end position="859"/>
    </location>
</feature>
<feature type="domain" description="Cadherin 1" evidence="3">
    <location>
        <begin position="36"/>
        <end position="135"/>
    </location>
</feature>
<feature type="domain" description="Cadherin 2" evidence="3">
    <location>
        <begin position="136"/>
        <end position="246"/>
    </location>
</feature>
<feature type="domain" description="Cadherin 3" evidence="3">
    <location>
        <begin position="247"/>
        <end position="353"/>
    </location>
</feature>
<feature type="domain" description="Cadherin 4" evidence="3">
    <location>
        <begin position="359"/>
        <end position="472"/>
    </location>
</feature>
<feature type="domain" description="Cadherin 5" evidence="3">
    <location>
        <begin position="473"/>
        <end position="576"/>
    </location>
</feature>
<feature type="domain" description="Cadherin 6" evidence="3">
    <location>
        <begin position="573"/>
        <end position="688"/>
    </location>
</feature>
<feature type="region of interest" description="Disordered" evidence="4">
    <location>
        <begin position="770"/>
        <end position="838"/>
    </location>
</feature>
<feature type="compositionally biased region" description="Low complexity" evidence="4">
    <location>
        <begin position="775"/>
        <end position="791"/>
    </location>
</feature>
<feature type="glycosylation site" description="N-linked (GlcNAc...) asparagine" evidence="2">
    <location>
        <position position="58"/>
    </location>
</feature>
<feature type="glycosylation site" description="N-linked (GlcNAc...) asparagine" evidence="2">
    <location>
        <position position="89"/>
    </location>
</feature>
<feature type="glycosylation site" description="N-linked (GlcNAc...) asparagine" evidence="2">
    <location>
        <position position="296"/>
    </location>
</feature>
<feature type="splice variant" id="VSP_031190" description="In isoform 2." evidence="11">
    <original>TLSRSPMAAFLIQTKDNPMKAVGVLAGTMATVVAITVLISTATFWRNKKSNKVLPMRRVLRKRP</original>
    <variation>VRRLRYMKNSNFPGTTKSVRKPKFKPKKPHSSQGLFLHPHCEIALFNLSNVNLYSRVFQGAAQAS</variation>
    <location>
        <begin position="681"/>
        <end position="744"/>
    </location>
</feature>
<feature type="splice variant" id="VSP_031191" description="In isoform 2." evidence="11">
    <location>
        <begin position="745"/>
        <end position="859"/>
    </location>
</feature>
<feature type="sequence variant" id="VAR_038744" description="In dbSNP:rs12781048.">
    <original>H</original>
    <variation>Q</variation>
    <location>
        <position position="53"/>
    </location>
</feature>
<feature type="sequence variant" id="VAR_083318" description="In dbSNP:rs759855253." evidence="10">
    <original>T</original>
    <variation>S</variation>
    <location>
        <position position="171"/>
    </location>
</feature>
<feature type="sequence variant" id="VAR_038745" description="In dbSNP:rs200880106." evidence="5">
    <original>A</original>
    <variation>T</variation>
    <location>
        <position position="212"/>
    </location>
</feature>
<feature type="sequence variant" id="VAR_038746" description="In dbSNP:rs7086200.">
    <original>A</original>
    <variation>V</variation>
    <location>
        <position position="243"/>
    </location>
</feature>
<feature type="sequence variant" id="VAR_038747" description="In dbSNP:rs143662988." evidence="5">
    <original>P</original>
    <variation>A</variation>
    <location>
        <position position="532"/>
    </location>
</feature>
<feature type="sequence variant" id="VAR_075501" description="In CORD15; dbSNP:rs746501731." evidence="8">
    <original>P</original>
    <variation>A</variation>
    <location>
        <position position="574"/>
    </location>
</feature>
<feature type="sequence variant" id="VAR_080429" description="Found in a patient with Joubert syndrome; uncertain significance." evidence="9">
    <original>T</original>
    <variation>S</variation>
    <location>
        <position position="716"/>
    </location>
</feature>